<protein>
    <recommendedName>
        <fullName evidence="1">NAD kinase</fullName>
        <ecNumber evidence="1">2.7.1.23</ecNumber>
    </recommendedName>
    <alternativeName>
        <fullName evidence="1">ATP-dependent NAD kinase</fullName>
    </alternativeName>
</protein>
<gene>
    <name evidence="1" type="primary">nadK</name>
    <name type="ordered locus">TRQ2_1092</name>
</gene>
<sequence length="258" mass="29240">MKIAILYREEREKEGKFLKEKISKEHEVIEFGKANAPGRVTADLIVVVGGDGTVLKAAKKAADGTPMVGFKAGRLGFLTSYTLDEIDRFLEDLRNWNFREETRWFIQIESELGNHLALNDVTLERDLSGKMVEIEVEVEHHSSMWFFADGVVISTPTGSTAYSLSIGGPIIFPECEVLEISPIAPQFFLTRSVVIPSNFKVVVESQRDINMLVDGVLTGKTKRIEVKKSRRYVRILRPPEYDYVTVIRDKLGYGRRIE</sequence>
<name>NADK_THESQ</name>
<evidence type="ECO:0000255" key="1">
    <source>
        <dbReference type="HAMAP-Rule" id="MF_00361"/>
    </source>
</evidence>
<feature type="chain" id="PRO_1000120896" description="NAD kinase">
    <location>
        <begin position="1"/>
        <end position="258"/>
    </location>
</feature>
<feature type="active site" description="Proton acceptor" evidence="1">
    <location>
        <position position="51"/>
    </location>
</feature>
<feature type="binding site" evidence="1">
    <location>
        <begin position="51"/>
        <end position="52"/>
    </location>
    <ligand>
        <name>NAD(+)</name>
        <dbReference type="ChEBI" id="CHEBI:57540"/>
    </ligand>
</feature>
<feature type="binding site" evidence="1">
    <location>
        <position position="56"/>
    </location>
    <ligand>
        <name>NAD(+)</name>
        <dbReference type="ChEBI" id="CHEBI:57540"/>
    </ligand>
</feature>
<feature type="binding site" evidence="1">
    <location>
        <begin position="119"/>
        <end position="120"/>
    </location>
    <ligand>
        <name>NAD(+)</name>
        <dbReference type="ChEBI" id="CHEBI:57540"/>
    </ligand>
</feature>
<feature type="binding site" evidence="1">
    <location>
        <position position="130"/>
    </location>
    <ligand>
        <name>NAD(+)</name>
        <dbReference type="ChEBI" id="CHEBI:57540"/>
    </ligand>
</feature>
<feature type="binding site" evidence="1">
    <location>
        <position position="149"/>
    </location>
    <ligand>
        <name>NAD(+)</name>
        <dbReference type="ChEBI" id="CHEBI:57540"/>
    </ligand>
</feature>
<feature type="binding site" evidence="1">
    <location>
        <begin position="160"/>
        <end position="165"/>
    </location>
    <ligand>
        <name>NAD(+)</name>
        <dbReference type="ChEBI" id="CHEBI:57540"/>
    </ligand>
</feature>
<feature type="binding site" evidence="1">
    <location>
        <position position="184"/>
    </location>
    <ligand>
        <name>NAD(+)</name>
        <dbReference type="ChEBI" id="CHEBI:57540"/>
    </ligand>
</feature>
<keyword id="KW-0067">ATP-binding</keyword>
<keyword id="KW-0963">Cytoplasm</keyword>
<keyword id="KW-0418">Kinase</keyword>
<keyword id="KW-0520">NAD</keyword>
<keyword id="KW-0521">NADP</keyword>
<keyword id="KW-0547">Nucleotide-binding</keyword>
<keyword id="KW-0808">Transferase</keyword>
<proteinExistence type="inferred from homology"/>
<comment type="function">
    <text evidence="1">Involved in the regulation of the intracellular balance of NAD and NADP, and is a key enzyme in the biosynthesis of NADP. Catalyzes specifically the phosphorylation on 2'-hydroxyl of the adenosine moiety of NAD to yield NADP.</text>
</comment>
<comment type="catalytic activity">
    <reaction evidence="1">
        <text>NAD(+) + ATP = ADP + NADP(+) + H(+)</text>
        <dbReference type="Rhea" id="RHEA:18629"/>
        <dbReference type="ChEBI" id="CHEBI:15378"/>
        <dbReference type="ChEBI" id="CHEBI:30616"/>
        <dbReference type="ChEBI" id="CHEBI:57540"/>
        <dbReference type="ChEBI" id="CHEBI:58349"/>
        <dbReference type="ChEBI" id="CHEBI:456216"/>
        <dbReference type="EC" id="2.7.1.23"/>
    </reaction>
</comment>
<comment type="cofactor">
    <cofactor evidence="1">
        <name>a divalent metal cation</name>
        <dbReference type="ChEBI" id="CHEBI:60240"/>
    </cofactor>
</comment>
<comment type="subcellular location">
    <subcellularLocation>
        <location evidence="1">Cytoplasm</location>
    </subcellularLocation>
</comment>
<comment type="similarity">
    <text evidence="1">Belongs to the NAD kinase family.</text>
</comment>
<reference key="1">
    <citation type="journal article" date="2011" name="J. Bacteriol.">
        <title>Genome sequence of Thermotoga sp. strain RQ2, a hyperthermophilic bacterium isolated from a geothermally heated region of the seafloor near Ribeira Quente, the Azores.</title>
        <authorList>
            <person name="Swithers K.S."/>
            <person name="DiPippo J.L."/>
            <person name="Bruce D.C."/>
            <person name="Detter C."/>
            <person name="Tapia R."/>
            <person name="Han S."/>
            <person name="Saunders E."/>
            <person name="Goodwin L.A."/>
            <person name="Han J."/>
            <person name="Woyke T."/>
            <person name="Pitluck S."/>
            <person name="Pennacchio L."/>
            <person name="Nolan M."/>
            <person name="Mikhailova N."/>
            <person name="Lykidis A."/>
            <person name="Land M.L."/>
            <person name="Brettin T."/>
            <person name="Stetter K.O."/>
            <person name="Nelson K.E."/>
            <person name="Gogarten J.P."/>
            <person name="Noll K.M."/>
        </authorList>
    </citation>
    <scope>NUCLEOTIDE SEQUENCE [LARGE SCALE GENOMIC DNA]</scope>
    <source>
        <strain>RQ2</strain>
    </source>
</reference>
<dbReference type="EC" id="2.7.1.23" evidence="1"/>
<dbReference type="EMBL" id="CP000969">
    <property type="protein sequence ID" value="ACB09438.1"/>
    <property type="molecule type" value="Genomic_DNA"/>
</dbReference>
<dbReference type="RefSeq" id="WP_012310932.1">
    <property type="nucleotide sequence ID" value="NC_010483.1"/>
</dbReference>
<dbReference type="SMR" id="B1LAU0"/>
<dbReference type="KEGG" id="trq:TRQ2_1092"/>
<dbReference type="HOGENOM" id="CLU_008831_0_3_0"/>
<dbReference type="Proteomes" id="UP000001687">
    <property type="component" value="Chromosome"/>
</dbReference>
<dbReference type="GO" id="GO:0005737">
    <property type="term" value="C:cytoplasm"/>
    <property type="evidence" value="ECO:0007669"/>
    <property type="project" value="UniProtKB-SubCell"/>
</dbReference>
<dbReference type="GO" id="GO:0005524">
    <property type="term" value="F:ATP binding"/>
    <property type="evidence" value="ECO:0007669"/>
    <property type="project" value="UniProtKB-KW"/>
</dbReference>
<dbReference type="GO" id="GO:0046872">
    <property type="term" value="F:metal ion binding"/>
    <property type="evidence" value="ECO:0007669"/>
    <property type="project" value="UniProtKB-UniRule"/>
</dbReference>
<dbReference type="GO" id="GO:0051287">
    <property type="term" value="F:NAD binding"/>
    <property type="evidence" value="ECO:0007669"/>
    <property type="project" value="UniProtKB-ARBA"/>
</dbReference>
<dbReference type="GO" id="GO:0003951">
    <property type="term" value="F:NAD+ kinase activity"/>
    <property type="evidence" value="ECO:0007669"/>
    <property type="project" value="UniProtKB-UniRule"/>
</dbReference>
<dbReference type="GO" id="GO:0019674">
    <property type="term" value="P:NAD metabolic process"/>
    <property type="evidence" value="ECO:0007669"/>
    <property type="project" value="InterPro"/>
</dbReference>
<dbReference type="GO" id="GO:0006741">
    <property type="term" value="P:NADP biosynthetic process"/>
    <property type="evidence" value="ECO:0007669"/>
    <property type="project" value="UniProtKB-UniRule"/>
</dbReference>
<dbReference type="Gene3D" id="3.40.50.10330">
    <property type="entry name" value="Probable inorganic polyphosphate/atp-NAD kinase, domain 1"/>
    <property type="match status" value="1"/>
</dbReference>
<dbReference type="Gene3D" id="2.60.200.30">
    <property type="entry name" value="Probable inorganic polyphosphate/atp-NAD kinase, domain 2"/>
    <property type="match status" value="1"/>
</dbReference>
<dbReference type="HAMAP" id="MF_00361">
    <property type="entry name" value="NAD_kinase"/>
    <property type="match status" value="1"/>
</dbReference>
<dbReference type="InterPro" id="IPR017438">
    <property type="entry name" value="ATP-NAD_kinase_N"/>
</dbReference>
<dbReference type="InterPro" id="IPR017437">
    <property type="entry name" value="ATP-NAD_kinase_PpnK-typ_C"/>
</dbReference>
<dbReference type="InterPro" id="IPR016064">
    <property type="entry name" value="NAD/diacylglycerol_kinase_sf"/>
</dbReference>
<dbReference type="InterPro" id="IPR002504">
    <property type="entry name" value="NADK"/>
</dbReference>
<dbReference type="NCBIfam" id="NF010677">
    <property type="entry name" value="PRK14075.1"/>
    <property type="match status" value="1"/>
</dbReference>
<dbReference type="PANTHER" id="PTHR20275">
    <property type="entry name" value="NAD KINASE"/>
    <property type="match status" value="1"/>
</dbReference>
<dbReference type="PANTHER" id="PTHR20275:SF0">
    <property type="entry name" value="NAD KINASE"/>
    <property type="match status" value="1"/>
</dbReference>
<dbReference type="Pfam" id="PF01513">
    <property type="entry name" value="NAD_kinase"/>
    <property type="match status" value="1"/>
</dbReference>
<dbReference type="Pfam" id="PF20143">
    <property type="entry name" value="NAD_kinase_C"/>
    <property type="match status" value="1"/>
</dbReference>
<dbReference type="SUPFAM" id="SSF111331">
    <property type="entry name" value="NAD kinase/diacylglycerol kinase-like"/>
    <property type="match status" value="1"/>
</dbReference>
<accession>B1LAU0</accession>
<organism>
    <name type="scientific">Thermotoga sp. (strain RQ2)</name>
    <dbReference type="NCBI Taxonomy" id="126740"/>
    <lineage>
        <taxon>Bacteria</taxon>
        <taxon>Thermotogati</taxon>
        <taxon>Thermotogota</taxon>
        <taxon>Thermotogae</taxon>
        <taxon>Thermotogales</taxon>
        <taxon>Thermotogaceae</taxon>
        <taxon>Thermotoga</taxon>
    </lineage>
</organism>